<keyword id="KW-0536">Nodulation</keyword>
<keyword id="KW-0808">Transferase</keyword>
<feature type="chain" id="PRO_0000096906" description="Nodulation protein H">
    <location>
        <begin position="1"/>
        <end position="249"/>
    </location>
</feature>
<sequence>MIHSLPSPEPFVILAMPRTGTHYLEALLNDHPNILSNGELLNSYDENWPDKDRLRHSDRELLELAYMRYPPAKKKVTHVGCKINEPQFYERPGFFDELARWQGLKVILLTRNTLESLRSLVQARQTGQWLKFSPDRNEPPSVSLSVNECEAYFKAADDFHARVKDAFDPSKLLMIEYQDLLLKPSACLAAVLAFLGAPAHRFSNRATIQRQETRSLARSLRNFVELRRHFAGGPYAKFFELDDASAPQG</sequence>
<accession>P52994</accession>
<reference key="1">
    <citation type="journal article" date="1996" name="Mol. Plant Microbe Interact.">
        <title>Isolation and characterization of Rhizobium tropici Nod factor sulfation genes.</title>
        <authorList>
            <person name="Laeremans T."/>
            <person name="Caluwaerts I."/>
            <person name="Verreth C."/>
            <person name="Rogel M.A."/>
            <person name="Vanderleyden J."/>
            <person name="Martinez-Romero E."/>
        </authorList>
    </citation>
    <scope>NUCLEOTIDE SEQUENCE [GENOMIC DNA]</scope>
    <source>
        <strain>CFN 299</strain>
    </source>
</reference>
<reference key="2">
    <citation type="journal article" date="1996" name="Mol. Plant Microbe Interact.">
        <title>Characterization of Rhizobium tropici CIAT899 nodulation factors: the role of nodH and nodPQ genes in their sulfation.</title>
        <authorList>
            <person name="Folch-Mallol J.L."/>
            <person name="Marroqui S."/>
            <person name="Sousa C."/>
            <person name="Manyani H."/>
            <person name="Lopez-Lara I.M."/>
            <person name="van der Drift K.M.G.M."/>
            <person name="Haverkamp J."/>
            <person name="Quinto C."/>
            <person name="Gil-Serrano A."/>
            <person name="Thomas-Oates J."/>
            <person name="Spaink H.P."/>
            <person name="Megias M."/>
        </authorList>
    </citation>
    <scope>NUCLEOTIDE SEQUENCE [GENOMIC DNA]</scope>
    <source>
        <strain>CIAT899</strain>
    </source>
</reference>
<protein>
    <recommendedName>
        <fullName>Nodulation protein H</fullName>
        <ecNumber>2.8.2.-</ecNumber>
    </recommendedName>
</protein>
<comment type="function">
    <text>Required for the formation of sulfated nod factor. Proposed to transfer activated sulfate (PAPS) to a N-acetylglucosamine of the nod factor.</text>
</comment>
<organism>
    <name type="scientific">Rhizobium tropici</name>
    <dbReference type="NCBI Taxonomy" id="398"/>
    <lineage>
        <taxon>Bacteria</taxon>
        <taxon>Pseudomonadati</taxon>
        <taxon>Pseudomonadota</taxon>
        <taxon>Alphaproteobacteria</taxon>
        <taxon>Hyphomicrobiales</taxon>
        <taxon>Rhizobiaceae</taxon>
        <taxon>Rhizobium/Agrobacterium group</taxon>
        <taxon>Rhizobium</taxon>
    </lineage>
</organism>
<name>NODH_RHITR</name>
<proteinExistence type="predicted"/>
<dbReference type="EC" id="2.8.2.-"/>
<dbReference type="EMBL" id="U47272">
    <property type="protein sequence ID" value="AAB08982.1"/>
    <property type="molecule type" value="Genomic_DNA"/>
</dbReference>
<dbReference type="EMBL" id="X87608">
    <property type="protein sequence ID" value="CAA60912.1"/>
    <property type="molecule type" value="Genomic_DNA"/>
</dbReference>
<dbReference type="RefSeq" id="WP_004125985.1">
    <property type="nucleotide sequence ID" value="NZ_JACIFW010000028.1"/>
</dbReference>
<dbReference type="SMR" id="P52994"/>
<dbReference type="GO" id="GO:0008146">
    <property type="term" value="F:sulfotransferase activity"/>
    <property type="evidence" value="ECO:0007669"/>
    <property type="project" value="InterPro"/>
</dbReference>
<dbReference type="Gene3D" id="3.40.50.300">
    <property type="entry name" value="P-loop containing nucleotide triphosphate hydrolases"/>
    <property type="match status" value="1"/>
</dbReference>
<dbReference type="InterPro" id="IPR052796">
    <property type="entry name" value="Nod_factor_sulfotransferase"/>
</dbReference>
<dbReference type="InterPro" id="IPR027417">
    <property type="entry name" value="P-loop_NTPase"/>
</dbReference>
<dbReference type="InterPro" id="IPR000863">
    <property type="entry name" value="Sulfotransferase_dom"/>
</dbReference>
<dbReference type="PANTHER" id="PTHR32175">
    <property type="entry name" value="PROTEIN, PUTATIVE, EXPRESSED-RELATED"/>
    <property type="match status" value="1"/>
</dbReference>
<dbReference type="PANTHER" id="PTHR32175:SF26">
    <property type="entry name" value="PROTEIN, PUTATIVE, EXPRESSED-RELATED"/>
    <property type="match status" value="1"/>
</dbReference>
<dbReference type="Pfam" id="PF00685">
    <property type="entry name" value="Sulfotransfer_1"/>
    <property type="match status" value="1"/>
</dbReference>
<dbReference type="SUPFAM" id="SSF52540">
    <property type="entry name" value="P-loop containing nucleoside triphosphate hydrolases"/>
    <property type="match status" value="1"/>
</dbReference>
<gene>
    <name type="primary">nodH</name>
</gene>